<organism>
    <name type="scientific">Escherichia coli (strain K12)</name>
    <dbReference type="NCBI Taxonomy" id="83333"/>
    <lineage>
        <taxon>Bacteria</taxon>
        <taxon>Pseudomonadati</taxon>
        <taxon>Pseudomonadota</taxon>
        <taxon>Gammaproteobacteria</taxon>
        <taxon>Enterobacterales</taxon>
        <taxon>Enterobacteriaceae</taxon>
        <taxon>Escherichia</taxon>
    </lineage>
</organism>
<evidence type="ECO:0000255" key="1">
    <source>
        <dbReference type="PROSITE-ProRule" id="PRU00253"/>
    </source>
</evidence>
<evidence type="ECO:0000305" key="2"/>
<name>YEEY_ECOLI</name>
<comment type="similarity">
    <text evidence="2">Belongs to the LysR transcriptional regulatory family.</text>
</comment>
<accession>P76369</accession>
<accession>O07996</accession>
<sequence length="309" mass="34169">MKPLLDVLMILDALEKEGSFAAASAKLYKTPSALSYTVHKLESDLNIQLLDRSGHRAKFTRTGKMLLEKGREVLHTVRELEKQAIKLHEGWENELVIGVDDTFPFSLLAPLIEAFYQHHSVTRLKFINGVLGGSWDALTQGRADIIVGAMHEPPSSSEFGFSRLGDLEQVFAVAPHHPLALEEEPLNRRIIKRYRAIVVGDTAQAGASTASQLLDEQEAITVFDFKTKLELQISGLGCGYLPRYLAQRFLDSGALIEKKVVAQTLFEPVWIGWNEQTAGLASGWWRDEILANSAIAGVYAKSDDGKSAI</sequence>
<keyword id="KW-0238">DNA-binding</keyword>
<keyword id="KW-1185">Reference proteome</keyword>
<keyword id="KW-0804">Transcription</keyword>
<keyword id="KW-0805">Transcription regulation</keyword>
<protein>
    <recommendedName>
        <fullName>Uncharacterized HTH-type transcriptional regulator YeeY</fullName>
    </recommendedName>
</protein>
<reference key="1">
    <citation type="journal article" date="1996" name="DNA Res.">
        <title>A 460-kb DNA sequence of the Escherichia coli K-12 genome corresponding to the 40.1-50.0 min region on the linkage map.</title>
        <authorList>
            <person name="Itoh T."/>
            <person name="Aiba H."/>
            <person name="Baba T."/>
            <person name="Fujita K."/>
            <person name="Hayashi K."/>
            <person name="Inada T."/>
            <person name="Isono K."/>
            <person name="Kasai H."/>
            <person name="Kimura S."/>
            <person name="Kitakawa M."/>
            <person name="Kitagawa M."/>
            <person name="Makino K."/>
            <person name="Miki T."/>
            <person name="Mizobuchi K."/>
            <person name="Mori H."/>
            <person name="Mori T."/>
            <person name="Motomura K."/>
            <person name="Nakade S."/>
            <person name="Nakamura Y."/>
            <person name="Nashimoto H."/>
            <person name="Nishio Y."/>
            <person name="Oshima T."/>
            <person name="Saito N."/>
            <person name="Sampei G."/>
            <person name="Seki Y."/>
            <person name="Sivasundaram S."/>
            <person name="Tagami H."/>
            <person name="Takeda J."/>
            <person name="Takemoto K."/>
            <person name="Wada C."/>
            <person name="Yamamoto Y."/>
            <person name="Horiuchi T."/>
        </authorList>
    </citation>
    <scope>NUCLEOTIDE SEQUENCE [LARGE SCALE GENOMIC DNA]</scope>
    <source>
        <strain>K12 / W3110 / ATCC 27325 / DSM 5911</strain>
    </source>
</reference>
<reference key="2">
    <citation type="journal article" date="1997" name="Science">
        <title>The complete genome sequence of Escherichia coli K-12.</title>
        <authorList>
            <person name="Blattner F.R."/>
            <person name="Plunkett G. III"/>
            <person name="Bloch C.A."/>
            <person name="Perna N.T."/>
            <person name="Burland V."/>
            <person name="Riley M."/>
            <person name="Collado-Vides J."/>
            <person name="Glasner J.D."/>
            <person name="Rode C.K."/>
            <person name="Mayhew G.F."/>
            <person name="Gregor J."/>
            <person name="Davis N.W."/>
            <person name="Kirkpatrick H.A."/>
            <person name="Goeden M.A."/>
            <person name="Rose D.J."/>
            <person name="Mau B."/>
            <person name="Shao Y."/>
        </authorList>
    </citation>
    <scope>NUCLEOTIDE SEQUENCE [LARGE SCALE GENOMIC DNA]</scope>
    <source>
        <strain>K12 / MG1655 / ATCC 47076</strain>
    </source>
</reference>
<reference key="3">
    <citation type="journal article" date="2006" name="Mol. Syst. Biol.">
        <title>Highly accurate genome sequences of Escherichia coli K-12 strains MG1655 and W3110.</title>
        <authorList>
            <person name="Hayashi K."/>
            <person name="Morooka N."/>
            <person name="Yamamoto Y."/>
            <person name="Fujita K."/>
            <person name="Isono K."/>
            <person name="Choi S."/>
            <person name="Ohtsubo E."/>
            <person name="Baba T."/>
            <person name="Wanner B.L."/>
            <person name="Mori H."/>
            <person name="Horiuchi T."/>
        </authorList>
    </citation>
    <scope>NUCLEOTIDE SEQUENCE [LARGE SCALE GENOMIC DNA]</scope>
    <source>
        <strain>K12 / W3110 / ATCC 27325 / DSM 5911</strain>
    </source>
</reference>
<gene>
    <name type="primary">yeeY</name>
    <name type="ordered locus">b2015</name>
    <name type="ordered locus">JW5834</name>
</gene>
<proteinExistence type="inferred from homology"/>
<dbReference type="EMBL" id="U00096">
    <property type="protein sequence ID" value="AAC75076.2"/>
    <property type="molecule type" value="Genomic_DNA"/>
</dbReference>
<dbReference type="EMBL" id="AP009048">
    <property type="protein sequence ID" value="BAA15848.2"/>
    <property type="molecule type" value="Genomic_DNA"/>
</dbReference>
<dbReference type="PIR" id="F64966">
    <property type="entry name" value="F64966"/>
</dbReference>
<dbReference type="RefSeq" id="NP_416519.4">
    <property type="nucleotide sequence ID" value="NC_000913.3"/>
</dbReference>
<dbReference type="RefSeq" id="WP_000803351.1">
    <property type="nucleotide sequence ID" value="NZ_SSTT01000011.1"/>
</dbReference>
<dbReference type="SMR" id="P76369"/>
<dbReference type="BioGRID" id="4259166">
    <property type="interactions" value="118"/>
</dbReference>
<dbReference type="FunCoup" id="P76369">
    <property type="interactions" value="13"/>
</dbReference>
<dbReference type="STRING" id="511145.b2015"/>
<dbReference type="PaxDb" id="511145-b2015"/>
<dbReference type="DNASU" id="946532"/>
<dbReference type="EnsemblBacteria" id="AAC75076">
    <property type="protein sequence ID" value="AAC75076"/>
    <property type="gene ID" value="b2015"/>
</dbReference>
<dbReference type="GeneID" id="946532"/>
<dbReference type="KEGG" id="ecj:JW5834"/>
<dbReference type="KEGG" id="eco:b2015"/>
<dbReference type="KEGG" id="ecoc:C3026_11365"/>
<dbReference type="PATRIC" id="fig|511145.12.peg.2092"/>
<dbReference type="EchoBASE" id="EB3173"/>
<dbReference type="eggNOG" id="COG0583">
    <property type="taxonomic scope" value="Bacteria"/>
</dbReference>
<dbReference type="HOGENOM" id="CLU_039613_35_1_6"/>
<dbReference type="InParanoid" id="P76369"/>
<dbReference type="OMA" id="MLEFVFA"/>
<dbReference type="OrthoDB" id="5293066at2"/>
<dbReference type="PhylomeDB" id="P76369"/>
<dbReference type="BioCyc" id="EcoCyc:G7088-MONOMER"/>
<dbReference type="PRO" id="PR:P76369"/>
<dbReference type="Proteomes" id="UP000000625">
    <property type="component" value="Chromosome"/>
</dbReference>
<dbReference type="GO" id="GO:0003700">
    <property type="term" value="F:DNA-binding transcription factor activity"/>
    <property type="evidence" value="ECO:0007669"/>
    <property type="project" value="InterPro"/>
</dbReference>
<dbReference type="GO" id="GO:0000976">
    <property type="term" value="F:transcription cis-regulatory region binding"/>
    <property type="evidence" value="ECO:0000318"/>
    <property type="project" value="GO_Central"/>
</dbReference>
<dbReference type="GO" id="GO:0006355">
    <property type="term" value="P:regulation of DNA-templated transcription"/>
    <property type="evidence" value="ECO:0000318"/>
    <property type="project" value="GO_Central"/>
</dbReference>
<dbReference type="FunFam" id="1.10.10.10:FF:000063">
    <property type="entry name" value="LysR family transcriptional regulator"/>
    <property type="match status" value="1"/>
</dbReference>
<dbReference type="Gene3D" id="3.40.190.290">
    <property type="match status" value="1"/>
</dbReference>
<dbReference type="Gene3D" id="1.10.10.10">
    <property type="entry name" value="Winged helix-like DNA-binding domain superfamily/Winged helix DNA-binding domain"/>
    <property type="match status" value="1"/>
</dbReference>
<dbReference type="InterPro" id="IPR005119">
    <property type="entry name" value="LysR_subst-bd"/>
</dbReference>
<dbReference type="InterPro" id="IPR000847">
    <property type="entry name" value="Tscrpt_reg_HTH_LysR"/>
</dbReference>
<dbReference type="InterPro" id="IPR036388">
    <property type="entry name" value="WH-like_DNA-bd_sf"/>
</dbReference>
<dbReference type="InterPro" id="IPR036390">
    <property type="entry name" value="WH_DNA-bd_sf"/>
</dbReference>
<dbReference type="PANTHER" id="PTHR30126">
    <property type="entry name" value="HTH-TYPE TRANSCRIPTIONAL REGULATOR"/>
    <property type="match status" value="1"/>
</dbReference>
<dbReference type="PANTHER" id="PTHR30126:SF4">
    <property type="entry name" value="LYSR FAMILY TRANSCRIPTIONAL REGULATOR"/>
    <property type="match status" value="1"/>
</dbReference>
<dbReference type="Pfam" id="PF00126">
    <property type="entry name" value="HTH_1"/>
    <property type="match status" value="1"/>
</dbReference>
<dbReference type="Pfam" id="PF03466">
    <property type="entry name" value="LysR_substrate"/>
    <property type="match status" value="1"/>
</dbReference>
<dbReference type="SUPFAM" id="SSF53850">
    <property type="entry name" value="Periplasmic binding protein-like II"/>
    <property type="match status" value="1"/>
</dbReference>
<dbReference type="SUPFAM" id="SSF46785">
    <property type="entry name" value="Winged helix' DNA-binding domain"/>
    <property type="match status" value="1"/>
</dbReference>
<dbReference type="PROSITE" id="PS50931">
    <property type="entry name" value="HTH_LYSR"/>
    <property type="match status" value="1"/>
</dbReference>
<feature type="chain" id="PRO_0000105787" description="Uncharacterized HTH-type transcriptional regulator YeeY">
    <location>
        <begin position="1"/>
        <end position="309"/>
    </location>
</feature>
<feature type="domain" description="HTH lysR-type" evidence="1">
    <location>
        <begin position="1"/>
        <end position="60"/>
    </location>
</feature>
<feature type="DNA-binding region" description="H-T-H motif" evidence="1">
    <location>
        <begin position="20"/>
        <end position="39"/>
    </location>
</feature>